<keyword id="KW-0067">ATP-binding</keyword>
<keyword id="KW-0460">Magnesium</keyword>
<keyword id="KW-0464">Manganese</keyword>
<keyword id="KW-0479">Metal-binding</keyword>
<keyword id="KW-0547">Nucleotide-binding</keyword>
<keyword id="KW-0548">Nucleotidyltransferase</keyword>
<keyword id="KW-0808">Transferase</keyword>
<gene>
    <name evidence="1" type="primary">ydiU</name>
    <name evidence="1" type="synonym">selO</name>
    <name type="ordered locus">BCAH187_A3529</name>
</gene>
<proteinExistence type="inferred from homology"/>
<reference key="1">
    <citation type="submission" date="2008-10" db="EMBL/GenBank/DDBJ databases">
        <title>Genome sequence of Bacillus cereus AH187.</title>
        <authorList>
            <person name="Dodson R.J."/>
            <person name="Durkin A.S."/>
            <person name="Rosovitz M.J."/>
            <person name="Rasko D.A."/>
            <person name="Kolsto A.B."/>
            <person name="Okstad O.A."/>
            <person name="Ravel J."/>
            <person name="Sutton G."/>
        </authorList>
    </citation>
    <scope>NUCLEOTIDE SEQUENCE [LARGE SCALE GENOMIC DNA]</scope>
    <source>
        <strain>AH187</strain>
    </source>
</reference>
<name>SELO_BACC7</name>
<accession>B7HZ82</accession>
<feature type="chain" id="PRO_1000132089" description="Protein nucleotidyltransferase YdiU">
    <location>
        <begin position="1"/>
        <end position="488"/>
    </location>
</feature>
<feature type="active site" description="Proton acceptor" evidence="1">
    <location>
        <position position="253"/>
    </location>
</feature>
<feature type="binding site" evidence="1">
    <location>
        <position position="91"/>
    </location>
    <ligand>
        <name>ATP</name>
        <dbReference type="ChEBI" id="CHEBI:30616"/>
    </ligand>
</feature>
<feature type="binding site" evidence="1">
    <location>
        <position position="93"/>
    </location>
    <ligand>
        <name>ATP</name>
        <dbReference type="ChEBI" id="CHEBI:30616"/>
    </ligand>
</feature>
<feature type="binding site" evidence="1">
    <location>
        <position position="94"/>
    </location>
    <ligand>
        <name>ATP</name>
        <dbReference type="ChEBI" id="CHEBI:30616"/>
    </ligand>
</feature>
<feature type="binding site" evidence="1">
    <location>
        <position position="114"/>
    </location>
    <ligand>
        <name>ATP</name>
        <dbReference type="ChEBI" id="CHEBI:30616"/>
    </ligand>
</feature>
<feature type="binding site" evidence="1">
    <location>
        <position position="126"/>
    </location>
    <ligand>
        <name>ATP</name>
        <dbReference type="ChEBI" id="CHEBI:30616"/>
    </ligand>
</feature>
<feature type="binding site" evidence="1">
    <location>
        <position position="127"/>
    </location>
    <ligand>
        <name>ATP</name>
        <dbReference type="ChEBI" id="CHEBI:30616"/>
    </ligand>
</feature>
<feature type="binding site" evidence="1">
    <location>
        <position position="177"/>
    </location>
    <ligand>
        <name>ATP</name>
        <dbReference type="ChEBI" id="CHEBI:30616"/>
    </ligand>
</feature>
<feature type="binding site" evidence="1">
    <location>
        <position position="184"/>
    </location>
    <ligand>
        <name>ATP</name>
        <dbReference type="ChEBI" id="CHEBI:30616"/>
    </ligand>
</feature>
<feature type="binding site" evidence="1">
    <location>
        <position position="254"/>
    </location>
    <ligand>
        <name>Mg(2+)</name>
        <dbReference type="ChEBI" id="CHEBI:18420"/>
    </ligand>
</feature>
<feature type="binding site" evidence="1">
    <location>
        <position position="263"/>
    </location>
    <ligand>
        <name>ATP</name>
        <dbReference type="ChEBI" id="CHEBI:30616"/>
    </ligand>
</feature>
<feature type="binding site" evidence="1">
    <location>
        <position position="263"/>
    </location>
    <ligand>
        <name>Mg(2+)</name>
        <dbReference type="ChEBI" id="CHEBI:18420"/>
    </ligand>
</feature>
<dbReference type="EC" id="2.7.7.-" evidence="1"/>
<dbReference type="EC" id="2.7.7.108" evidence="1"/>
<dbReference type="EMBL" id="CP001177">
    <property type="protein sequence ID" value="ACJ77645.1"/>
    <property type="molecule type" value="Genomic_DNA"/>
</dbReference>
<dbReference type="SMR" id="B7HZ82"/>
<dbReference type="KEGG" id="bcr:BCAH187_A3529"/>
<dbReference type="HOGENOM" id="CLU_010245_4_1_9"/>
<dbReference type="Proteomes" id="UP000002214">
    <property type="component" value="Chromosome"/>
</dbReference>
<dbReference type="GO" id="GO:0070733">
    <property type="term" value="F:AMPylase activity"/>
    <property type="evidence" value="ECO:0007669"/>
    <property type="project" value="RHEA"/>
</dbReference>
<dbReference type="GO" id="GO:0005524">
    <property type="term" value="F:ATP binding"/>
    <property type="evidence" value="ECO:0007669"/>
    <property type="project" value="UniProtKB-UniRule"/>
</dbReference>
<dbReference type="GO" id="GO:0000287">
    <property type="term" value="F:magnesium ion binding"/>
    <property type="evidence" value="ECO:0007669"/>
    <property type="project" value="UniProtKB-UniRule"/>
</dbReference>
<dbReference type="HAMAP" id="MF_00692">
    <property type="entry name" value="YdiU_SelO"/>
    <property type="match status" value="1"/>
</dbReference>
<dbReference type="InterPro" id="IPR003846">
    <property type="entry name" value="SelO"/>
</dbReference>
<dbReference type="NCBIfam" id="NF000658">
    <property type="entry name" value="PRK00029.1"/>
    <property type="match status" value="1"/>
</dbReference>
<dbReference type="PANTHER" id="PTHR32057">
    <property type="entry name" value="PROTEIN ADENYLYLTRANSFERASE SELO, MITOCHONDRIAL"/>
    <property type="match status" value="1"/>
</dbReference>
<dbReference type="PANTHER" id="PTHR32057:SF14">
    <property type="entry name" value="PROTEIN ADENYLYLTRANSFERASE SELO, MITOCHONDRIAL"/>
    <property type="match status" value="1"/>
</dbReference>
<dbReference type="Pfam" id="PF02696">
    <property type="entry name" value="SelO"/>
    <property type="match status" value="1"/>
</dbReference>
<organism>
    <name type="scientific">Bacillus cereus (strain AH187)</name>
    <dbReference type="NCBI Taxonomy" id="405534"/>
    <lineage>
        <taxon>Bacteria</taxon>
        <taxon>Bacillati</taxon>
        <taxon>Bacillota</taxon>
        <taxon>Bacilli</taxon>
        <taxon>Bacillales</taxon>
        <taxon>Bacillaceae</taxon>
        <taxon>Bacillus</taxon>
        <taxon>Bacillus cereus group</taxon>
    </lineage>
</organism>
<sequence>MTKNNEAGWNLDHSYTTLPQSFYTEIPPTPVSSPELVKLNHSLAISLGFNPEELKKEAEIAIFAGNALPEGAHPLAQAYAGHQFGHFNMLGDGRALLIGEQMTPAGKRFDIQLKGSGPTPYSRRGDGRAALGPMLREYIISEAMYALDIPTTRSLAVVTTGEPTYRETKLPGAILTRVASSHIRVGTFQYAAARGSIEDLQSLADYTIKRHYPEIEDHENRYTALLQEVIKRQASLIAKWQLVGFIHGVMNTDNITISGETIDYGPCAFMDNYDQGTVFSSIDTQGRYAYGNQPYMAAWDLARLAESLIPILHEDEEEALKIAQDEISKFSVQYENQWFLGMKKKLGLFSNEEQDQSLIEQLLKMMEKFKADYTNTFRSLTLNTLENTPLFDSPEFKEWYKLWQSRLEKQDESKENAYEMMKNNNPSIIPRNHRVEEALEAAVTSGDYSVMEKLLEALANPYAYTTDQEEYCVPPAPTNRPYRTFCGT</sequence>
<evidence type="ECO:0000255" key="1">
    <source>
        <dbReference type="HAMAP-Rule" id="MF_00692"/>
    </source>
</evidence>
<protein>
    <recommendedName>
        <fullName evidence="1">Protein nucleotidyltransferase YdiU</fullName>
        <ecNumber evidence="1">2.7.7.-</ecNumber>
    </recommendedName>
    <alternativeName>
        <fullName evidence="1">Protein adenylyltransferase YdiU</fullName>
        <ecNumber evidence="1">2.7.7.108</ecNumber>
    </alternativeName>
    <alternativeName>
        <fullName evidence="1">Protein uridylyltransferase YdiU</fullName>
        <ecNumber evidence="1">2.7.7.-</ecNumber>
    </alternativeName>
</protein>
<comment type="function">
    <text evidence="1">Nucleotidyltransferase involved in the post-translational modification of proteins. It can catalyze the addition of adenosine monophosphate (AMP) or uridine monophosphate (UMP) to a protein, resulting in modifications known as AMPylation and UMPylation.</text>
</comment>
<comment type="catalytic activity">
    <reaction evidence="1">
        <text>L-seryl-[protein] + ATP = 3-O-(5'-adenylyl)-L-seryl-[protein] + diphosphate</text>
        <dbReference type="Rhea" id="RHEA:58120"/>
        <dbReference type="Rhea" id="RHEA-COMP:9863"/>
        <dbReference type="Rhea" id="RHEA-COMP:15073"/>
        <dbReference type="ChEBI" id="CHEBI:29999"/>
        <dbReference type="ChEBI" id="CHEBI:30616"/>
        <dbReference type="ChEBI" id="CHEBI:33019"/>
        <dbReference type="ChEBI" id="CHEBI:142516"/>
        <dbReference type="EC" id="2.7.7.108"/>
    </reaction>
</comment>
<comment type="catalytic activity">
    <reaction evidence="1">
        <text>L-threonyl-[protein] + ATP = 3-O-(5'-adenylyl)-L-threonyl-[protein] + diphosphate</text>
        <dbReference type="Rhea" id="RHEA:54292"/>
        <dbReference type="Rhea" id="RHEA-COMP:11060"/>
        <dbReference type="Rhea" id="RHEA-COMP:13847"/>
        <dbReference type="ChEBI" id="CHEBI:30013"/>
        <dbReference type="ChEBI" id="CHEBI:30616"/>
        <dbReference type="ChEBI" id="CHEBI:33019"/>
        <dbReference type="ChEBI" id="CHEBI:138113"/>
        <dbReference type="EC" id="2.7.7.108"/>
    </reaction>
</comment>
<comment type="catalytic activity">
    <reaction evidence="1">
        <text>L-tyrosyl-[protein] + ATP = O-(5'-adenylyl)-L-tyrosyl-[protein] + diphosphate</text>
        <dbReference type="Rhea" id="RHEA:54288"/>
        <dbReference type="Rhea" id="RHEA-COMP:10136"/>
        <dbReference type="Rhea" id="RHEA-COMP:13846"/>
        <dbReference type="ChEBI" id="CHEBI:30616"/>
        <dbReference type="ChEBI" id="CHEBI:33019"/>
        <dbReference type="ChEBI" id="CHEBI:46858"/>
        <dbReference type="ChEBI" id="CHEBI:83624"/>
        <dbReference type="EC" id="2.7.7.108"/>
    </reaction>
</comment>
<comment type="catalytic activity">
    <reaction evidence="1">
        <text>L-histidyl-[protein] + UTP = N(tele)-(5'-uridylyl)-L-histidyl-[protein] + diphosphate</text>
        <dbReference type="Rhea" id="RHEA:83891"/>
        <dbReference type="Rhea" id="RHEA-COMP:9745"/>
        <dbReference type="Rhea" id="RHEA-COMP:20239"/>
        <dbReference type="ChEBI" id="CHEBI:29979"/>
        <dbReference type="ChEBI" id="CHEBI:33019"/>
        <dbReference type="ChEBI" id="CHEBI:46398"/>
        <dbReference type="ChEBI" id="CHEBI:233474"/>
    </reaction>
</comment>
<comment type="catalytic activity">
    <reaction evidence="1">
        <text>L-seryl-[protein] + UTP = O-(5'-uridylyl)-L-seryl-[protein] + diphosphate</text>
        <dbReference type="Rhea" id="RHEA:64604"/>
        <dbReference type="Rhea" id="RHEA-COMP:9863"/>
        <dbReference type="Rhea" id="RHEA-COMP:16635"/>
        <dbReference type="ChEBI" id="CHEBI:29999"/>
        <dbReference type="ChEBI" id="CHEBI:33019"/>
        <dbReference type="ChEBI" id="CHEBI:46398"/>
        <dbReference type="ChEBI" id="CHEBI:156051"/>
    </reaction>
</comment>
<comment type="catalytic activity">
    <reaction evidence="1">
        <text>L-tyrosyl-[protein] + UTP = O-(5'-uridylyl)-L-tyrosyl-[protein] + diphosphate</text>
        <dbReference type="Rhea" id="RHEA:83887"/>
        <dbReference type="Rhea" id="RHEA-COMP:10136"/>
        <dbReference type="Rhea" id="RHEA-COMP:20238"/>
        <dbReference type="ChEBI" id="CHEBI:33019"/>
        <dbReference type="ChEBI" id="CHEBI:46398"/>
        <dbReference type="ChEBI" id="CHEBI:46858"/>
        <dbReference type="ChEBI" id="CHEBI:90602"/>
    </reaction>
</comment>
<comment type="cofactor">
    <cofactor evidence="1">
        <name>Mg(2+)</name>
        <dbReference type="ChEBI" id="CHEBI:18420"/>
    </cofactor>
    <cofactor evidence="1">
        <name>Mn(2+)</name>
        <dbReference type="ChEBI" id="CHEBI:29035"/>
    </cofactor>
</comment>
<comment type="similarity">
    <text evidence="1">Belongs to the SELO family.</text>
</comment>